<gene>
    <name evidence="3" type="primary">DAG1</name>
</gene>
<comment type="function">
    <text evidence="1">The dystroglycan complex is involved in a number of processes including laminin and basement membrane assembly, sarcolemmal stability, cell survival, peripheral nerve myelination, nodal structure, cell migration, and epithelial polarization.</text>
</comment>
<comment type="function">
    <molecule>Alpha-dystroglycan</molecule>
    <text evidence="2">Extracellular peripheral glycoprotein that acts as a receptor for extracellular matrix proteins containing laminin-G domains. Receptor for laminin-2 (LAMA2) and agrin in peripheral nerve Schwann cells (By similarity). Also acts as a receptor for laminin LAMA5 (By similarity).</text>
</comment>
<comment type="function">
    <molecule>Beta-dystroglycan</molecule>
    <text evidence="1">Transmembrane protein that plays important roles in connecting the extracellular matrix to the cytoskeleton. Acts as a cell adhesion receptor in both muscle and non-muscle tissues. Receptor for both DMD and UTRN and, through these interactions, scaffolds axin to the cytoskeleton. Also functions in cell adhesion-mediated signaling and implicated in cell polarity (By similarity).</text>
</comment>
<comment type="subunit">
    <text evidence="3 4 5">Monomer. Heterodimer of alpha- and beta-dystroglycan subunits which are the central components of the dystrophin-glycoprotein complex. This complex then can form a dystrophin-associated glycoprotein complex (DGC) which is composed of three subcomplexes: a cytoplasmic complex comprised of DMD (or UTRN), DTNA and a number of syntrophins, such as SNTB1, SNTB2, SNTG1 and SNTG2, the transmembrane dystroglycan complex, and the sarcoglycan-sarcospan complex. Interacts (via the N-terminal of alphaDAG1) with LARGE1; the interaction enhances laminin binding (By similarity). Interacts with SGCD. Interacts with AGR2 and AGR3. Interacts (betaDAG1) with DMD; the interaction is inhibited by phosphorylation on the PPXY motif. Interacts (betaDAG1, via its PPXY motif) with UTRN (via its WWW and ZZ domains); the interaction is inhibited by phosphorylation on the PPXY motif. Interacts (betaDAG1, via its phosphorylated PPXY motif) with the SH2 domain-containing proteins, FYN, CSK, NCK and SHC. Interacts (betaDAG1) with CAV3 (via a central WW-like domain); the interaction disrupts the binding of DMD. BetaDAG1 directly interacts with ANK3, but not with ANK2; this interaction does not interfere with DMD-binding and is required for retention at costameres (By similarity). Identified in a dystroglycan complex that contains at least PRX, DRP2, UTRN, DMD and DAG1 (By similarity). Interacts with POMGNT1 (By similarity). BetaDAG1 interacts with CD93 (By similarity).</text>
</comment>
<comment type="subcellular location">
    <molecule>Alpha-dystroglycan</molecule>
    <subcellularLocation>
        <location evidence="1">Secreted</location>
        <location evidence="1">Extracellular space</location>
    </subcellularLocation>
</comment>
<comment type="subcellular location">
    <molecule>Beta-dystroglycan</molecule>
    <subcellularLocation>
        <location evidence="1">Cell membrane</location>
        <topology evidence="1">Single-pass type I membrane protein</topology>
    </subcellularLocation>
    <subcellularLocation>
        <location>Cytoplasm</location>
        <location>Cytoskeleton</location>
    </subcellularLocation>
    <subcellularLocation>
        <location>Nucleus</location>
        <location>Nucleoplasm</location>
    </subcellularLocation>
    <subcellularLocation>
        <location evidence="1">Cell membrane</location>
        <location evidence="1">Sarcolemma</location>
    </subcellularLocation>
    <subcellularLocation>
        <location evidence="1">Postsynaptic cell membrane</location>
    </subcellularLocation>
    <text evidence="1">The monomeric form translocates to the nucleus via the action of importins and depends on RAN. Nuclear transport is inhibited by Tyr-892 phosphorylation. In skeletal muscle, this phosphorylated form locates to a vesicular internal membrane compartment. In muscle cells, sarcolemma localization requires the presence of ANK2, while localization to costameres requires the presence of ANK3. Localizes to neuromuscular junctions (NMJs) in the presence of ANK2 (By similarity). In peripheral nerves, localizes to the Schwann cell membrane. Colocalizes with ERM proteins in Schwann-cell microvilli (By similarity).</text>
</comment>
<comment type="PTM">
    <molecule>Alpha-dystroglycan</molecule>
    <text evidence="2 3">O-glycosylated. POMGNT1 catalyzes the initial addition of N-acetylglucosamine, giving rise to the GlcNAc(beta1-2)Man(alpha1-)O-Ser/Thr moiety and thus providing the necessary basis for the addition of further carbohydrate moieties. Heavily O-glycosylated comprising of up to two thirds of its mass and the carbohydrate composition differs depending on tissue type. Mucin-type O-glycosylation is important for ligand binding activity. O-mannosylation is found in high abundance in both brain and muscle where the most abundant glycan is Sia-alpha-2-3-Gal-beta-1-4-Glc-NAc-beta-1-2-Man. In muscle, glycosylation on Thr-314, Thr-316 and Thr-376 by a phosphorylated O-mannosyl glycan with the structure 2-(N-acetylamido)-2-deoxygalactosyl-beta-1,3-2-(N-acetylamido)-2-deoxyglucosyl-beta-1,4-6-phosphomannose is mediated by like-acetylglucosaminyltransferase (LARGE1) protein amd is required for laminin binding. O-glycosylated in the N-terminal region with a core 1 or possibly core 8 glycan. The brain form displays a unique glycosylation pattern which is absent in other tissues; this form shows enhanced binding to laminin LAMA5 compared to the skeletal muscle form (By similarity).</text>
</comment>
<comment type="PTM">
    <molecule>Beta-dystroglycan</molecule>
    <text evidence="3">N-glycosylated.</text>
</comment>
<comment type="PTM">
    <text evidence="1">Autolytic cleavage produces the alpha and beta subunits. In cutaneous cells, as well as in certain pathological conditions, shedding of beta-dystroglycan can occur releasing a peptide of about 30 kDa (By similarity).</text>
</comment>
<comment type="PTM">
    <text evidence="1">SRC-mediated phosphorylation of the PPXY motif of the beta subunit recruits SH2 domain-containing proteins, but inhibits binding to WWW domain-containing proteins, DMD and UTRN. This phosphorylation also inhibits nuclear entry (By similarity).</text>
</comment>
<name>DAG1_CANLF</name>
<protein>
    <recommendedName>
        <fullName evidence="3">Dystroglycan 1</fullName>
    </recommendedName>
    <alternativeName>
        <fullName evidence="8">Dystroglycan</fullName>
    </alternativeName>
    <alternativeName>
        <fullName evidence="3">Dystrophin-associated glycoprotein 1</fullName>
    </alternativeName>
    <component>
        <recommendedName>
            <fullName>Alpha-dystroglycan</fullName>
            <shortName>Alpha-DG</shortName>
        </recommendedName>
    </component>
    <component>
        <recommendedName>
            <fullName>Beta-dystroglycan</fullName>
            <shortName>Beta-DG</shortName>
        </recommendedName>
    </component>
</protein>
<dbReference type="EMBL" id="AJ012166">
    <property type="protein sequence ID" value="CAB62568.1"/>
    <property type="molecule type" value="Genomic_DNA"/>
</dbReference>
<dbReference type="RefSeq" id="NP_001029164.1">
    <property type="nucleotide sequence ID" value="NM_001033992.1"/>
</dbReference>
<dbReference type="RefSeq" id="XP_005632375.1">
    <property type="nucleotide sequence ID" value="XM_005632318.2"/>
</dbReference>
<dbReference type="RefSeq" id="XP_005632376.1">
    <property type="nucleotide sequence ID" value="XM_005632319.2"/>
</dbReference>
<dbReference type="RefSeq" id="XP_038282356.1">
    <property type="nucleotide sequence ID" value="XM_038426428.1"/>
</dbReference>
<dbReference type="RefSeq" id="XP_038282357.1">
    <property type="nucleotide sequence ID" value="XM_038426429.1"/>
</dbReference>
<dbReference type="RefSeq" id="XP_038282358.1">
    <property type="nucleotide sequence ID" value="XM_038426430.1"/>
</dbReference>
<dbReference type="RefSeq" id="XP_038282359.1">
    <property type="nucleotide sequence ID" value="XM_038426431.1"/>
</dbReference>
<dbReference type="RefSeq" id="XP_038282360.1">
    <property type="nucleotide sequence ID" value="XM_038426432.1"/>
</dbReference>
<dbReference type="SMR" id="Q9TSZ6"/>
<dbReference type="FunCoup" id="Q9TSZ6">
    <property type="interactions" value="135"/>
</dbReference>
<dbReference type="STRING" id="9615.ENSCAFP00000016488"/>
<dbReference type="MEROPS" id="S72.001"/>
<dbReference type="GlyCosmos" id="Q9TSZ6">
    <property type="glycosylation" value="7 sites, No reported glycans"/>
</dbReference>
<dbReference type="SwissPalm" id="Q9TSZ6"/>
<dbReference type="PaxDb" id="9612-ENSCAFP00000016488"/>
<dbReference type="Ensembl" id="ENSCAFT00000017810.5">
    <property type="protein sequence ID" value="ENSCAFP00000016488.3"/>
    <property type="gene ID" value="ENSCAFG00000011207.5"/>
</dbReference>
<dbReference type="Ensembl" id="ENSCAFT00030025431.1">
    <property type="protein sequence ID" value="ENSCAFP00030022207.1"/>
    <property type="gene ID" value="ENSCAFG00030013738.1"/>
</dbReference>
<dbReference type="Ensembl" id="ENSCAFT00845045847.1">
    <property type="protein sequence ID" value="ENSCAFP00845035994.1"/>
    <property type="gene ID" value="ENSCAFG00845025980.1"/>
</dbReference>
<dbReference type="GeneID" id="476623"/>
<dbReference type="KEGG" id="cfa:476623"/>
<dbReference type="CTD" id="1605"/>
<dbReference type="VEuPathDB" id="HostDB:ENSCAFG00845025980"/>
<dbReference type="VGNC" id="VGNC:39763">
    <property type="gene designation" value="DAG1"/>
</dbReference>
<dbReference type="eggNOG" id="KOG3781">
    <property type="taxonomic scope" value="Eukaryota"/>
</dbReference>
<dbReference type="GeneTree" id="ENSGT00390000008429"/>
<dbReference type="HOGENOM" id="CLU_007629_2_0_1"/>
<dbReference type="InParanoid" id="Q9TSZ6"/>
<dbReference type="OMA" id="WRLGCSL"/>
<dbReference type="OrthoDB" id="5990676at2759"/>
<dbReference type="TreeFam" id="TF328370"/>
<dbReference type="Reactome" id="R-CFA-5173105">
    <property type="pathway name" value="O-linked glycosylation"/>
</dbReference>
<dbReference type="Reactome" id="R-CFA-9010553">
    <property type="pathway name" value="Regulation of expression of SLITs and ROBOs"/>
</dbReference>
<dbReference type="Reactome" id="R-CFA-9913351">
    <property type="pathway name" value="Formation of the dystrophin-glycoprotein complex (DGC)"/>
</dbReference>
<dbReference type="Proteomes" id="UP000002254">
    <property type="component" value="Chromosome 20"/>
</dbReference>
<dbReference type="Proteomes" id="UP000694429">
    <property type="component" value="Chromosome 20"/>
</dbReference>
<dbReference type="Proteomes" id="UP000694542">
    <property type="component" value="Unplaced"/>
</dbReference>
<dbReference type="Proteomes" id="UP000805418">
    <property type="component" value="Chromosome 20"/>
</dbReference>
<dbReference type="Bgee" id="ENSCAFG00000011207">
    <property type="expression patterns" value="Expressed in cardiac muscle of left ventricle and 46 other cell types or tissues"/>
</dbReference>
<dbReference type="GO" id="GO:0005604">
    <property type="term" value="C:basement membrane"/>
    <property type="evidence" value="ECO:0000318"/>
    <property type="project" value="GO_Central"/>
</dbReference>
<dbReference type="GO" id="GO:0005911">
    <property type="term" value="C:cell-cell junction"/>
    <property type="evidence" value="ECO:0007669"/>
    <property type="project" value="Ensembl"/>
</dbReference>
<dbReference type="GO" id="GO:0070938">
    <property type="term" value="C:contractile ring"/>
    <property type="evidence" value="ECO:0007669"/>
    <property type="project" value="Ensembl"/>
</dbReference>
<dbReference type="GO" id="GO:0005737">
    <property type="term" value="C:cytoplasm"/>
    <property type="evidence" value="ECO:0007669"/>
    <property type="project" value="UniProtKB-KW"/>
</dbReference>
<dbReference type="GO" id="GO:0005856">
    <property type="term" value="C:cytoskeleton"/>
    <property type="evidence" value="ECO:0007669"/>
    <property type="project" value="UniProtKB-SubCell"/>
</dbReference>
<dbReference type="GO" id="GO:0016011">
    <property type="term" value="C:dystroglycan complex"/>
    <property type="evidence" value="ECO:0000318"/>
    <property type="project" value="GO_Central"/>
</dbReference>
<dbReference type="GO" id="GO:0009897">
    <property type="term" value="C:external side of plasma membrane"/>
    <property type="evidence" value="ECO:0007669"/>
    <property type="project" value="Ensembl"/>
</dbReference>
<dbReference type="GO" id="GO:0005615">
    <property type="term" value="C:extracellular space"/>
    <property type="evidence" value="ECO:0000318"/>
    <property type="project" value="GO_Central"/>
</dbReference>
<dbReference type="GO" id="GO:0030175">
    <property type="term" value="C:filopodium"/>
    <property type="evidence" value="ECO:0007669"/>
    <property type="project" value="Ensembl"/>
</dbReference>
<dbReference type="GO" id="GO:0005925">
    <property type="term" value="C:focal adhesion"/>
    <property type="evidence" value="ECO:0007669"/>
    <property type="project" value="Ensembl"/>
</dbReference>
<dbReference type="GO" id="GO:0098982">
    <property type="term" value="C:GABA-ergic synapse"/>
    <property type="evidence" value="ECO:0007669"/>
    <property type="project" value="Ensembl"/>
</dbReference>
<dbReference type="GO" id="GO:0030027">
    <property type="term" value="C:lamellipodium"/>
    <property type="evidence" value="ECO:0007669"/>
    <property type="project" value="Ensembl"/>
</dbReference>
<dbReference type="GO" id="GO:0045121">
    <property type="term" value="C:membrane raft"/>
    <property type="evidence" value="ECO:0007669"/>
    <property type="project" value="Ensembl"/>
</dbReference>
<dbReference type="GO" id="GO:0033268">
    <property type="term" value="C:node of Ranvier"/>
    <property type="evidence" value="ECO:0007669"/>
    <property type="project" value="Ensembl"/>
</dbReference>
<dbReference type="GO" id="GO:0005654">
    <property type="term" value="C:nucleoplasm"/>
    <property type="evidence" value="ECO:0007669"/>
    <property type="project" value="UniProtKB-SubCell"/>
</dbReference>
<dbReference type="GO" id="GO:0098684">
    <property type="term" value="C:photoreceptor ribbon synapse"/>
    <property type="evidence" value="ECO:0007669"/>
    <property type="project" value="Ensembl"/>
</dbReference>
<dbReference type="GO" id="GO:0045211">
    <property type="term" value="C:postsynaptic membrane"/>
    <property type="evidence" value="ECO:0007669"/>
    <property type="project" value="UniProtKB-SubCell"/>
</dbReference>
<dbReference type="GO" id="GO:0042383">
    <property type="term" value="C:sarcolemma"/>
    <property type="evidence" value="ECO:0000318"/>
    <property type="project" value="GO_Central"/>
</dbReference>
<dbReference type="GO" id="GO:0003779">
    <property type="term" value="F:actin binding"/>
    <property type="evidence" value="ECO:0007669"/>
    <property type="project" value="Ensembl"/>
</dbReference>
<dbReference type="GO" id="GO:0051393">
    <property type="term" value="F:alpha-actinin binding"/>
    <property type="evidence" value="ECO:0007669"/>
    <property type="project" value="Ensembl"/>
</dbReference>
<dbReference type="GO" id="GO:0005509">
    <property type="term" value="F:calcium ion binding"/>
    <property type="evidence" value="ECO:0007669"/>
    <property type="project" value="InterPro"/>
</dbReference>
<dbReference type="GO" id="GO:0002162">
    <property type="term" value="F:dystroglycan binding"/>
    <property type="evidence" value="ECO:0007669"/>
    <property type="project" value="Ensembl"/>
</dbReference>
<dbReference type="GO" id="GO:0043236">
    <property type="term" value="F:laminin binding"/>
    <property type="evidence" value="ECO:0000318"/>
    <property type="project" value="GO_Central"/>
</dbReference>
<dbReference type="GO" id="GO:0044877">
    <property type="term" value="F:protein-containing complex binding"/>
    <property type="evidence" value="ECO:0007669"/>
    <property type="project" value="Ensembl"/>
</dbReference>
<dbReference type="GO" id="GO:0042169">
    <property type="term" value="F:SH2 domain binding"/>
    <property type="evidence" value="ECO:0007669"/>
    <property type="project" value="Ensembl"/>
</dbReference>
<dbReference type="GO" id="GO:0008307">
    <property type="term" value="F:structural constituent of muscle"/>
    <property type="evidence" value="ECO:0007669"/>
    <property type="project" value="Ensembl"/>
</dbReference>
<dbReference type="GO" id="GO:0015631">
    <property type="term" value="F:tubulin binding"/>
    <property type="evidence" value="ECO:0007669"/>
    <property type="project" value="Ensembl"/>
</dbReference>
<dbReference type="GO" id="GO:0017166">
    <property type="term" value="F:vinculin binding"/>
    <property type="evidence" value="ECO:0007669"/>
    <property type="project" value="Ensembl"/>
</dbReference>
<dbReference type="GO" id="GO:0001618">
    <property type="term" value="F:virus receptor activity"/>
    <property type="evidence" value="ECO:0007669"/>
    <property type="project" value="Ensembl"/>
</dbReference>
<dbReference type="GO" id="GO:0007411">
    <property type="term" value="P:axon guidance"/>
    <property type="evidence" value="ECO:0000318"/>
    <property type="project" value="GO_Central"/>
</dbReference>
<dbReference type="GO" id="GO:0071711">
    <property type="term" value="P:basement membrane organization"/>
    <property type="evidence" value="ECO:0007669"/>
    <property type="project" value="Ensembl"/>
</dbReference>
<dbReference type="GO" id="GO:0060445">
    <property type="term" value="P:branching involved in salivary gland morphogenesis"/>
    <property type="evidence" value="ECO:0007669"/>
    <property type="project" value="Ensembl"/>
</dbReference>
<dbReference type="GO" id="GO:0071679">
    <property type="term" value="P:commissural neuron axon guidance"/>
    <property type="evidence" value="ECO:0007669"/>
    <property type="project" value="Ensembl"/>
</dbReference>
<dbReference type="GO" id="GO:0060441">
    <property type="term" value="P:epithelial tube branching involved in lung morphogenesis"/>
    <property type="evidence" value="ECO:0007669"/>
    <property type="project" value="Ensembl"/>
</dbReference>
<dbReference type="GO" id="GO:0003007">
    <property type="term" value="P:heart morphogenesis"/>
    <property type="evidence" value="ECO:0007669"/>
    <property type="project" value="Ensembl"/>
</dbReference>
<dbReference type="GO" id="GO:0006509">
    <property type="term" value="P:membrane protein ectodomain proteolysis"/>
    <property type="evidence" value="ECO:0007669"/>
    <property type="project" value="Ensembl"/>
</dbReference>
<dbReference type="GO" id="GO:0034453">
    <property type="term" value="P:microtubule anchoring"/>
    <property type="evidence" value="ECO:0007669"/>
    <property type="project" value="Ensembl"/>
</dbReference>
<dbReference type="GO" id="GO:0002011">
    <property type="term" value="P:morphogenesis of an epithelial sheet"/>
    <property type="evidence" value="ECO:0007669"/>
    <property type="project" value="Ensembl"/>
</dbReference>
<dbReference type="GO" id="GO:0002009">
    <property type="term" value="P:morphogenesis of an epithelium"/>
    <property type="evidence" value="ECO:0000318"/>
    <property type="project" value="GO_Central"/>
</dbReference>
<dbReference type="GO" id="GO:0016203">
    <property type="term" value="P:muscle attachment"/>
    <property type="evidence" value="ECO:0000318"/>
    <property type="project" value="GO_Central"/>
</dbReference>
<dbReference type="GO" id="GO:0022011">
    <property type="term" value="P:myelination in peripheral nervous system"/>
    <property type="evidence" value="ECO:0007669"/>
    <property type="project" value="Ensembl"/>
</dbReference>
<dbReference type="GO" id="GO:0030336">
    <property type="term" value="P:negative regulation of cell migration"/>
    <property type="evidence" value="ECO:0007669"/>
    <property type="project" value="Ensembl"/>
</dbReference>
<dbReference type="GO" id="GO:0043409">
    <property type="term" value="P:negative regulation of MAPK cascade"/>
    <property type="evidence" value="ECO:0007669"/>
    <property type="project" value="Ensembl"/>
</dbReference>
<dbReference type="GO" id="GO:0051898">
    <property type="term" value="P:negative regulation of phosphatidylinositol 3-kinase/protein kinase B signal transduction"/>
    <property type="evidence" value="ECO:0007669"/>
    <property type="project" value="Ensembl"/>
</dbReference>
<dbReference type="GO" id="GO:0021675">
    <property type="term" value="P:nerve development"/>
    <property type="evidence" value="ECO:0000318"/>
    <property type="project" value="GO_Central"/>
</dbReference>
<dbReference type="GO" id="GO:0021682">
    <property type="term" value="P:nerve maturation"/>
    <property type="evidence" value="ECO:0007669"/>
    <property type="project" value="Ensembl"/>
</dbReference>
<dbReference type="GO" id="GO:0015031">
    <property type="term" value="P:protein transport"/>
    <property type="evidence" value="ECO:0007669"/>
    <property type="project" value="Ensembl"/>
</dbReference>
<dbReference type="GO" id="GO:0098696">
    <property type="term" value="P:regulation of neurotransmitter receptor localization to postsynaptic specialization membrane"/>
    <property type="evidence" value="ECO:0007669"/>
    <property type="project" value="Ensembl"/>
</dbReference>
<dbReference type="GO" id="GO:0050807">
    <property type="term" value="P:regulation of synapse organization"/>
    <property type="evidence" value="ECO:0007669"/>
    <property type="project" value="Ensembl"/>
</dbReference>
<dbReference type="GO" id="GO:0048167">
    <property type="term" value="P:regulation of synaptic plasticity"/>
    <property type="evidence" value="ECO:0007669"/>
    <property type="project" value="Ensembl"/>
</dbReference>
<dbReference type="GO" id="GO:0014850">
    <property type="term" value="P:response to muscle activity"/>
    <property type="evidence" value="ECO:0007669"/>
    <property type="project" value="Ensembl"/>
</dbReference>
<dbReference type="GO" id="GO:0098942">
    <property type="term" value="P:retrograde trans-synaptic signaling by trans-synaptic protein complex"/>
    <property type="evidence" value="ECO:0007669"/>
    <property type="project" value="Ensembl"/>
</dbReference>
<dbReference type="CDD" id="cd11305">
    <property type="entry name" value="alpha_DG_C"/>
    <property type="match status" value="1"/>
</dbReference>
<dbReference type="CDD" id="cd11303">
    <property type="entry name" value="Dystroglycan_repeat"/>
    <property type="match status" value="2"/>
</dbReference>
<dbReference type="FunFam" id="2.60.40.10:FF:000555">
    <property type="entry name" value="Dystroglycan 1"/>
    <property type="match status" value="1"/>
</dbReference>
<dbReference type="FunFam" id="2.60.40.10:FF:000684">
    <property type="entry name" value="Dystroglycan 1"/>
    <property type="match status" value="1"/>
</dbReference>
<dbReference type="FunFam" id="3.30.70.1040:FF:000001">
    <property type="entry name" value="Dystroglycan 1"/>
    <property type="match status" value="1"/>
</dbReference>
<dbReference type="Gene3D" id="3.30.70.1040">
    <property type="entry name" value="Dystroglycan, domain 2"/>
    <property type="match status" value="1"/>
</dbReference>
<dbReference type="Gene3D" id="2.60.40.10">
    <property type="entry name" value="Immunoglobulins"/>
    <property type="match status" value="2"/>
</dbReference>
<dbReference type="InterPro" id="IPR027468">
    <property type="entry name" value="Alpha-dystroglycan_domain_2"/>
</dbReference>
<dbReference type="InterPro" id="IPR041631">
    <property type="entry name" value="Alpha_DG1_N2"/>
</dbReference>
<dbReference type="InterPro" id="IPR006644">
    <property type="entry name" value="Cadg"/>
</dbReference>
<dbReference type="InterPro" id="IPR015919">
    <property type="entry name" value="Cadherin-like_sf"/>
</dbReference>
<dbReference type="InterPro" id="IPR008465">
    <property type="entry name" value="DAG1_C"/>
</dbReference>
<dbReference type="InterPro" id="IPR013783">
    <property type="entry name" value="Ig-like_fold"/>
</dbReference>
<dbReference type="InterPro" id="IPR030398">
    <property type="entry name" value="SEA_DG_dom"/>
</dbReference>
<dbReference type="PANTHER" id="PTHR21559:SF22">
    <property type="entry name" value="DYSTROGLYCAN 1"/>
    <property type="match status" value="1"/>
</dbReference>
<dbReference type="PANTHER" id="PTHR21559">
    <property type="entry name" value="DYSTROGLYCAN-RELATED"/>
    <property type="match status" value="1"/>
</dbReference>
<dbReference type="Pfam" id="PF18424">
    <property type="entry name" value="a_DG1_N2"/>
    <property type="match status" value="1"/>
</dbReference>
<dbReference type="Pfam" id="PF05454">
    <property type="entry name" value="DAG1"/>
    <property type="match status" value="1"/>
</dbReference>
<dbReference type="Pfam" id="PF05345">
    <property type="entry name" value="He_PIG"/>
    <property type="match status" value="1"/>
</dbReference>
<dbReference type="SMART" id="SM00736">
    <property type="entry name" value="CADG"/>
    <property type="match status" value="2"/>
</dbReference>
<dbReference type="SUPFAM" id="SSF49313">
    <property type="entry name" value="Cadherin-like"/>
    <property type="match status" value="2"/>
</dbReference>
<dbReference type="SUPFAM" id="SSF111006">
    <property type="entry name" value="Dystroglycan, domain 2"/>
    <property type="match status" value="1"/>
</dbReference>
<dbReference type="PROSITE" id="PS51699">
    <property type="entry name" value="SEA_DG"/>
    <property type="match status" value="1"/>
</dbReference>
<evidence type="ECO:0000250" key="1"/>
<evidence type="ECO:0000250" key="2">
    <source>
        <dbReference type="UniProtKB" id="O18738"/>
    </source>
</evidence>
<evidence type="ECO:0000250" key="3">
    <source>
        <dbReference type="UniProtKB" id="Q14118"/>
    </source>
</evidence>
<evidence type="ECO:0000250" key="4">
    <source>
        <dbReference type="UniProtKB" id="Q28685"/>
    </source>
</evidence>
<evidence type="ECO:0000250" key="5">
    <source>
        <dbReference type="UniProtKB" id="Q62165"/>
    </source>
</evidence>
<evidence type="ECO:0000255" key="6"/>
<evidence type="ECO:0000256" key="7">
    <source>
        <dbReference type="SAM" id="MobiDB-lite"/>
    </source>
</evidence>
<evidence type="ECO:0000303" key="8">
    <source>
    </source>
</evidence>
<accession>Q9TSZ6</accession>
<sequence>MRMSAGLSLLLPLWGRTFLLLLSVAMAQSHWPSEAGRDWENQLEASMHSVLSDLHEAVPTVVGIPDGIAVVGRSFRVTIPMDLIASNGELVKVSAVGKEVLPSWLHWDPQSHTLEGLPLDTDKGVHYISVSATRLGANGSHVPQTSSVFSIEVYPEDHSEPQSVRAASPDPAEVVSSACAADEPVTVLTVILDADLTKMTPKQRIDLLHRMRSFSEVELHNMKLVPVVNNRLFDMSAFMAGPGNAKKVVENGALLSWKLGCSLNQNNVPDIHGVEAPAREGAMSAQLGYPVVGWHIANKKPPIPKRIRRQIHATPTPVTAIGPPTTAIQEPPSRIVPTPTSPAIAPPTETMAPPVRDPVPGKPTVTIRTRGAIIQTPTLGPIQPTRVSEAGTTVPGQIRPTMTIPGYVEPTAVATPPTTTTKKPRVSTPKPATPSTDSSTTTTRRPTKKPRTPRPVPRVTTKAPITRLETASPPTRIRTTTSGVPRGGEPNQRPELKNHIDRVDAWVGTYFEVKIPSDTFYDHEDTTTDKLKLTLKLREQQLVGEKSWVQFNSNSQLMYGLPDSSHVGKHEYFMHATDKGGLSAVDAFEIHVHKRPQGDRAPARFKAKFMGDPVPVVNDIHKKISLVKKLAFAFGDRNCSTITLQNITRGSILVEWTNNTLPLEPCPKEQIMALSQRIAEDNGKPRAAFSNALEPDFQASSIAVTGSGSCRHLQFIPVAPPRRVPSEVPSTDVPDRDPEKSSEDDVYLHTVIPAVVVAAILLIAGIIAMICYRKKRKGKLTLEDQATFIKKGVPIIFADELDDSKPPPSSSMPLILQEEKAPLPPPEYPNQSVPETTPLNQDTVGEYTPLREEDPNAPPYQPPPPFTAPMEGKGSRPKNMTPYRSPPPYVPP</sequence>
<organism>
    <name type="scientific">Canis lupus familiaris</name>
    <name type="common">Dog</name>
    <name type="synonym">Canis familiaris</name>
    <dbReference type="NCBI Taxonomy" id="9615"/>
    <lineage>
        <taxon>Eukaryota</taxon>
        <taxon>Metazoa</taxon>
        <taxon>Chordata</taxon>
        <taxon>Craniata</taxon>
        <taxon>Vertebrata</taxon>
        <taxon>Euteleostomi</taxon>
        <taxon>Mammalia</taxon>
        <taxon>Eutheria</taxon>
        <taxon>Laurasiatheria</taxon>
        <taxon>Carnivora</taxon>
        <taxon>Caniformia</taxon>
        <taxon>Canidae</taxon>
        <taxon>Canis</taxon>
    </lineage>
</organism>
<keyword id="KW-1003">Cell membrane</keyword>
<keyword id="KW-0963">Cytoplasm</keyword>
<keyword id="KW-0206">Cytoskeleton</keyword>
<keyword id="KW-1015">Disulfide bond</keyword>
<keyword id="KW-0325">Glycoprotein</keyword>
<keyword id="KW-0472">Membrane</keyword>
<keyword id="KW-0539">Nucleus</keyword>
<keyword id="KW-0597">Phosphoprotein</keyword>
<keyword id="KW-0628">Postsynaptic cell membrane</keyword>
<keyword id="KW-1185">Reference proteome</keyword>
<keyword id="KW-0964">Secreted</keyword>
<keyword id="KW-0732">Signal</keyword>
<keyword id="KW-0770">Synapse</keyword>
<keyword id="KW-0812">Transmembrane</keyword>
<keyword id="KW-1133">Transmembrane helix</keyword>
<feature type="signal peptide" evidence="6">
    <location>
        <begin position="1"/>
        <end position="27"/>
    </location>
</feature>
<feature type="chain" id="PRO_0000021063" description="Alpha-dystroglycan">
    <location>
        <begin position="28"/>
        <end position="650"/>
    </location>
</feature>
<feature type="chain" id="PRO_0000021064" description="Beta-dystroglycan">
    <location>
        <begin position="651"/>
        <end position="892"/>
    </location>
</feature>
<feature type="topological domain" description="Extracellular" evidence="6">
    <location>
        <begin position="28"/>
        <end position="750"/>
    </location>
</feature>
<feature type="transmembrane region" description="Helical" evidence="6">
    <location>
        <begin position="751"/>
        <end position="771"/>
    </location>
</feature>
<feature type="topological domain" description="Cytoplasmic" evidence="6">
    <location>
        <begin position="772"/>
        <end position="892"/>
    </location>
</feature>
<feature type="domain" description="Peptidase S72">
    <location>
        <begin position="600"/>
        <end position="709"/>
    </location>
</feature>
<feature type="region of interest" description="Required for laminin recognition" evidence="1">
    <location>
        <begin position="30"/>
        <end position="405"/>
    </location>
</feature>
<feature type="region of interest" description="O-glycosylated at one site" evidence="1">
    <location>
        <begin position="46"/>
        <end position="68"/>
    </location>
</feature>
<feature type="region of interest" description="Mucin-like domain" evidence="1">
    <location>
        <begin position="313"/>
        <end position="482"/>
    </location>
</feature>
<feature type="region of interest" description="Disordered" evidence="7">
    <location>
        <begin position="378"/>
        <end position="497"/>
    </location>
</feature>
<feature type="region of interest" description="O-glycosylated at seven sites with GalNAc" evidence="1">
    <location>
        <begin position="460"/>
        <end position="482"/>
    </location>
</feature>
<feature type="region of interest" description="Disordered" evidence="7">
    <location>
        <begin position="721"/>
        <end position="742"/>
    </location>
</feature>
<feature type="region of interest" description="Required for interaction with CAV3" evidence="1">
    <location>
        <begin position="816"/>
        <end position="892"/>
    </location>
</feature>
<feature type="region of interest" description="Disordered" evidence="7">
    <location>
        <begin position="820"/>
        <end position="892"/>
    </location>
</feature>
<feature type="region of interest" description="Required for binding DMD and UTRN" evidence="1">
    <location>
        <begin position="877"/>
        <end position="892"/>
    </location>
</feature>
<feature type="short sequence motif" description="Nuclear localization signal" evidence="1">
    <location>
        <begin position="773"/>
        <end position="779"/>
    </location>
</feature>
<feature type="short sequence motif" description="PPXY motif" evidence="1">
    <location>
        <begin position="886"/>
        <end position="889"/>
    </location>
</feature>
<feature type="compositionally biased region" description="Low complexity" evidence="7">
    <location>
        <begin position="410"/>
        <end position="444"/>
    </location>
</feature>
<feature type="compositionally biased region" description="Basic and acidic residues" evidence="7">
    <location>
        <begin position="733"/>
        <end position="742"/>
    </location>
</feature>
<feature type="compositionally biased region" description="Polar residues" evidence="7">
    <location>
        <begin position="829"/>
        <end position="843"/>
    </location>
</feature>
<feature type="compositionally biased region" description="Pro residues" evidence="7">
    <location>
        <begin position="856"/>
        <end position="867"/>
    </location>
</feature>
<feature type="site" description="Cleavage; by autolysis" evidence="1">
    <location>
        <begin position="650"/>
        <end position="651"/>
    </location>
</feature>
<feature type="site" description="Cleavage; by MMP9" evidence="1">
    <location>
        <begin position="712"/>
        <end position="713"/>
    </location>
</feature>
<feature type="modified residue" description="Phosphothreonine" evidence="3">
    <location>
        <position position="787"/>
    </location>
</feature>
<feature type="modified residue" description="Phosphotyrosine; by SRC" evidence="3">
    <location>
        <position position="889"/>
    </location>
</feature>
<feature type="glycosylation site" description="N-linked (GlcNAc...) asparagine" evidence="6">
    <location>
        <position position="138"/>
    </location>
</feature>
<feature type="glycosylation site" description="O-linked (Man6P...) threonine" evidence="3">
    <location>
        <position position="314"/>
    </location>
</feature>
<feature type="glycosylation site" description="O-linked (Man6P...) threonine" evidence="3">
    <location>
        <position position="316"/>
    </location>
</feature>
<feature type="glycosylation site" description="O-linked (Man6P...) threonine" evidence="1">
    <location>
        <position position="376"/>
    </location>
</feature>
<feature type="glycosylation site" description="N-linked (GlcNAc...) asparagine" evidence="6">
    <location>
        <position position="638"/>
    </location>
</feature>
<feature type="glycosylation site" description="N-linked (GlcNAc...) asparagine" evidence="6">
    <location>
        <position position="646"/>
    </location>
</feature>
<feature type="glycosylation site" description="N-linked (GlcNAc...) asparagine" evidence="6">
    <location>
        <position position="658"/>
    </location>
</feature>
<feature type="disulfide bond" evidence="3">
    <location>
        <begin position="179"/>
        <end position="261"/>
    </location>
</feature>
<feature type="disulfide bond" evidence="3">
    <location>
        <begin position="666"/>
        <end position="710"/>
    </location>
</feature>
<proteinExistence type="inferred from homology"/>
<reference key="1">
    <citation type="journal article" date="2000" name="Genome Res.">
        <title>Genomic organization of the dog dystroglycan gene DAG1 locus on chromosome 20q15.1-q15.2.</title>
        <authorList>
            <person name="Leeb T."/>
            <person name="Neumann S."/>
            <person name="Deppe A."/>
            <person name="Breen M."/>
            <person name="Brenig B."/>
        </authorList>
    </citation>
    <scope>NUCLEOTIDE SEQUENCE [GENOMIC DNA]</scope>
</reference>